<dbReference type="EMBL" id="AK137398">
    <property type="protein sequence ID" value="BAE23342.1"/>
    <property type="molecule type" value="mRNA"/>
</dbReference>
<dbReference type="EMBL" id="AK137582">
    <property type="protein sequence ID" value="BAE23418.1"/>
    <property type="molecule type" value="mRNA"/>
</dbReference>
<dbReference type="EMBL" id="AK146430">
    <property type="protein sequence ID" value="BAE27164.1"/>
    <property type="molecule type" value="mRNA"/>
</dbReference>
<dbReference type="EMBL" id="AK154931">
    <property type="protein sequence ID" value="BAE32932.1"/>
    <property type="molecule type" value="mRNA"/>
</dbReference>
<dbReference type="EMBL" id="AK155597">
    <property type="protein sequence ID" value="BAE33339.1"/>
    <property type="molecule type" value="mRNA"/>
</dbReference>
<dbReference type="EMBL" id="AL590963">
    <property type="status" value="NOT_ANNOTATED_CDS"/>
    <property type="molecule type" value="Genomic_DNA"/>
</dbReference>
<dbReference type="EMBL" id="BC008989">
    <property type="protein sequence ID" value="AAH08989.1"/>
    <property type="molecule type" value="mRNA"/>
</dbReference>
<dbReference type="EMBL" id="AF291821">
    <property type="protein sequence ID" value="AAG01345.1"/>
    <property type="molecule type" value="mRNA"/>
</dbReference>
<dbReference type="EMBL" id="X86010">
    <property type="protein sequence ID" value="CAA59997.1"/>
    <property type="molecule type" value="mRNA"/>
</dbReference>
<dbReference type="EMBL" id="AY336125">
    <property type="protein sequence ID" value="AAS48348.1"/>
    <property type="molecule type" value="Genomic_DNA"/>
</dbReference>
<dbReference type="CCDS" id="CCDS25363.1"/>
<dbReference type="PIR" id="S52813">
    <property type="entry name" value="S52813"/>
</dbReference>
<dbReference type="RefSeq" id="NP_663409.2">
    <property type="nucleotide sequence ID" value="NM_145434.4"/>
</dbReference>
<dbReference type="SMR" id="Q3UV55"/>
<dbReference type="BioGRID" id="229856">
    <property type="interactions" value="4"/>
</dbReference>
<dbReference type="CORUM" id="Q3UV55"/>
<dbReference type="DIP" id="DIP-59440N"/>
<dbReference type="FunCoup" id="Q3UV55">
    <property type="interactions" value="280"/>
</dbReference>
<dbReference type="IntAct" id="Q3UV55">
    <property type="interactions" value="1"/>
</dbReference>
<dbReference type="STRING" id="10090.ENSMUSP00000069505"/>
<dbReference type="GlyGen" id="Q3UV55">
    <property type="glycosylation" value="2 sites"/>
</dbReference>
<dbReference type="iPTMnet" id="Q3UV55"/>
<dbReference type="PhosphoSitePlus" id="Q3UV55"/>
<dbReference type="PaxDb" id="10090-ENSMUSP00000069505"/>
<dbReference type="PeptideAtlas" id="Q3UV55"/>
<dbReference type="ProteomicsDB" id="295516"/>
<dbReference type="Antibodypedia" id="16433">
    <property type="antibodies" value="494 antibodies from 36 providers"/>
</dbReference>
<dbReference type="DNASU" id="217166"/>
<dbReference type="Ensembl" id="ENSMUST00000064941.7">
    <property type="protein sequence ID" value="ENSMUSP00000069505.7"/>
    <property type="gene ID" value="ENSMUSG00000020889.12"/>
</dbReference>
<dbReference type="GeneID" id="217166"/>
<dbReference type="KEGG" id="mmu:217166"/>
<dbReference type="UCSC" id="uc007lhh.2">
    <property type="organism name" value="mouse"/>
</dbReference>
<dbReference type="AGR" id="MGI:2444210"/>
<dbReference type="CTD" id="9572"/>
<dbReference type="MGI" id="MGI:2444210">
    <property type="gene designation" value="Nr1d1"/>
</dbReference>
<dbReference type="VEuPathDB" id="HostDB:ENSMUSG00000020889"/>
<dbReference type="eggNOG" id="KOG4846">
    <property type="taxonomic scope" value="Eukaryota"/>
</dbReference>
<dbReference type="GeneTree" id="ENSGT00940000160548"/>
<dbReference type="HOGENOM" id="CLU_007368_2_4_1"/>
<dbReference type="InParanoid" id="Q3UV55"/>
<dbReference type="OMA" id="LCPTHMY"/>
<dbReference type="OrthoDB" id="7634782at2759"/>
<dbReference type="PhylomeDB" id="Q3UV55"/>
<dbReference type="TreeFam" id="TF328382"/>
<dbReference type="Reactome" id="R-MMU-383280">
    <property type="pathway name" value="Nuclear Receptor transcription pathway"/>
</dbReference>
<dbReference type="BioGRID-ORCS" id="217166">
    <property type="hits" value="5 hits in 81 CRISPR screens"/>
</dbReference>
<dbReference type="PRO" id="PR:Q3UV55"/>
<dbReference type="Proteomes" id="UP000000589">
    <property type="component" value="Chromosome 11"/>
</dbReference>
<dbReference type="RNAct" id="Q3UV55">
    <property type="molecule type" value="protein"/>
</dbReference>
<dbReference type="Bgee" id="ENSMUSG00000020889">
    <property type="expression patterns" value="Expressed in retinal neural layer and 152 other cell types or tissues"/>
</dbReference>
<dbReference type="GO" id="GO:0000785">
    <property type="term" value="C:chromatin"/>
    <property type="evidence" value="ECO:0007669"/>
    <property type="project" value="Ensembl"/>
</dbReference>
<dbReference type="GO" id="GO:0005737">
    <property type="term" value="C:cytoplasm"/>
    <property type="evidence" value="ECO:0000314"/>
    <property type="project" value="UniProtKB"/>
</dbReference>
<dbReference type="GO" id="GO:0030425">
    <property type="term" value="C:dendrite"/>
    <property type="evidence" value="ECO:0000314"/>
    <property type="project" value="UniProtKB"/>
</dbReference>
<dbReference type="GO" id="GO:0043197">
    <property type="term" value="C:dendritic spine"/>
    <property type="evidence" value="ECO:0000314"/>
    <property type="project" value="UniProtKB"/>
</dbReference>
<dbReference type="GO" id="GO:0016604">
    <property type="term" value="C:nuclear body"/>
    <property type="evidence" value="ECO:0007669"/>
    <property type="project" value="Ensembl"/>
</dbReference>
<dbReference type="GO" id="GO:0005654">
    <property type="term" value="C:nucleoplasm"/>
    <property type="evidence" value="ECO:0000304"/>
    <property type="project" value="Reactome"/>
</dbReference>
<dbReference type="GO" id="GO:0005634">
    <property type="term" value="C:nucleus"/>
    <property type="evidence" value="ECO:0000314"/>
    <property type="project" value="UniProtKB"/>
</dbReference>
<dbReference type="GO" id="GO:0003677">
    <property type="term" value="F:DNA binding"/>
    <property type="evidence" value="ECO:0000314"/>
    <property type="project" value="MGI"/>
</dbReference>
<dbReference type="GO" id="GO:0003700">
    <property type="term" value="F:DNA-binding transcription factor activity"/>
    <property type="evidence" value="ECO:0000314"/>
    <property type="project" value="MGI"/>
</dbReference>
<dbReference type="GO" id="GO:0001227">
    <property type="term" value="F:DNA-binding transcription repressor activity, RNA polymerase II-specific"/>
    <property type="evidence" value="ECO:0007669"/>
    <property type="project" value="Ensembl"/>
</dbReference>
<dbReference type="GO" id="GO:0070888">
    <property type="term" value="F:E-box binding"/>
    <property type="evidence" value="ECO:0000314"/>
    <property type="project" value="UniProtKB"/>
</dbReference>
<dbReference type="GO" id="GO:0020037">
    <property type="term" value="F:heme binding"/>
    <property type="evidence" value="ECO:0007669"/>
    <property type="project" value="Ensembl"/>
</dbReference>
<dbReference type="GO" id="GO:0000977">
    <property type="term" value="F:RNA polymerase II transcription regulatory region sequence-specific DNA binding"/>
    <property type="evidence" value="ECO:0000266"/>
    <property type="project" value="MGI"/>
</dbReference>
<dbReference type="GO" id="GO:0001222">
    <property type="term" value="F:transcription corepressor binding"/>
    <property type="evidence" value="ECO:0000250"/>
    <property type="project" value="UniProtKB"/>
</dbReference>
<dbReference type="GO" id="GO:0008270">
    <property type="term" value="F:zinc ion binding"/>
    <property type="evidence" value="ECO:0007669"/>
    <property type="project" value="UniProtKB-KW"/>
</dbReference>
<dbReference type="GO" id="GO:0030154">
    <property type="term" value="P:cell differentiation"/>
    <property type="evidence" value="ECO:0007669"/>
    <property type="project" value="UniProtKB-KW"/>
</dbReference>
<dbReference type="GO" id="GO:0071347">
    <property type="term" value="P:cellular response to interleukin-1"/>
    <property type="evidence" value="ECO:0000314"/>
    <property type="project" value="UniProtKB"/>
</dbReference>
<dbReference type="GO" id="GO:0071222">
    <property type="term" value="P:cellular response to lipopolysaccharide"/>
    <property type="evidence" value="ECO:0007669"/>
    <property type="project" value="Ensembl"/>
</dbReference>
<dbReference type="GO" id="GO:0071356">
    <property type="term" value="P:cellular response to tumor necrosis factor"/>
    <property type="evidence" value="ECO:0000314"/>
    <property type="project" value="UniProtKB"/>
</dbReference>
<dbReference type="GO" id="GO:0042632">
    <property type="term" value="P:cholesterol homeostasis"/>
    <property type="evidence" value="ECO:0000315"/>
    <property type="project" value="UniProtKB"/>
</dbReference>
<dbReference type="GO" id="GO:0032922">
    <property type="term" value="P:circadian regulation of gene expression"/>
    <property type="evidence" value="ECO:0000315"/>
    <property type="project" value="UniProtKB"/>
</dbReference>
<dbReference type="GO" id="GO:0007623">
    <property type="term" value="P:circadian rhythm"/>
    <property type="evidence" value="ECO:0000314"/>
    <property type="project" value="MGI"/>
</dbReference>
<dbReference type="GO" id="GO:0060086">
    <property type="term" value="P:circadian temperature homeostasis"/>
    <property type="evidence" value="ECO:0000315"/>
    <property type="project" value="UniProtKB"/>
</dbReference>
<dbReference type="GO" id="GO:0005978">
    <property type="term" value="P:glycogen biosynthetic process"/>
    <property type="evidence" value="ECO:0000315"/>
    <property type="project" value="UniProtKB"/>
</dbReference>
<dbReference type="GO" id="GO:0001678">
    <property type="term" value="P:intracellular glucose homeostasis"/>
    <property type="evidence" value="ECO:0000250"/>
    <property type="project" value="UniProtKB"/>
</dbReference>
<dbReference type="GO" id="GO:0061889">
    <property type="term" value="P:negative regulation of astrocyte activation"/>
    <property type="evidence" value="ECO:0000315"/>
    <property type="project" value="UniProtKB"/>
</dbReference>
<dbReference type="GO" id="GO:0043124">
    <property type="term" value="P:negative regulation of canonical NF-kappaB signal transduction"/>
    <property type="evidence" value="ECO:0000315"/>
    <property type="project" value="UniProtKB"/>
</dbReference>
<dbReference type="GO" id="GO:0120163">
    <property type="term" value="P:negative regulation of cold-induced thermogenesis"/>
    <property type="evidence" value="ECO:0000315"/>
    <property type="project" value="YuBioLab"/>
</dbReference>
<dbReference type="GO" id="GO:0045892">
    <property type="term" value="P:negative regulation of DNA-templated transcription"/>
    <property type="evidence" value="ECO:0000314"/>
    <property type="project" value="UniProtKB"/>
</dbReference>
<dbReference type="GO" id="GO:0050728">
    <property type="term" value="P:negative regulation of inflammatory response"/>
    <property type="evidence" value="ECO:0000315"/>
    <property type="project" value="UniProtKB"/>
</dbReference>
<dbReference type="GO" id="GO:1903979">
    <property type="term" value="P:negative regulation of microglial cell activation"/>
    <property type="evidence" value="ECO:0000315"/>
    <property type="project" value="UniProtKB"/>
</dbReference>
<dbReference type="GO" id="GO:0150079">
    <property type="term" value="P:negative regulation of neuroinflammatory response"/>
    <property type="evidence" value="ECO:0000315"/>
    <property type="project" value="UniProtKB"/>
</dbReference>
<dbReference type="GO" id="GO:0034144">
    <property type="term" value="P:negative regulation of toll-like receptor 4 signaling pathway"/>
    <property type="evidence" value="ECO:0007669"/>
    <property type="project" value="Ensembl"/>
</dbReference>
<dbReference type="GO" id="GO:0000122">
    <property type="term" value="P:negative regulation of transcription by RNA polymerase II"/>
    <property type="evidence" value="ECO:0000266"/>
    <property type="project" value="MGI"/>
</dbReference>
<dbReference type="GO" id="GO:0070859">
    <property type="term" value="P:positive regulation of bile acid biosynthetic process"/>
    <property type="evidence" value="ECO:0000315"/>
    <property type="project" value="UniProtKB"/>
</dbReference>
<dbReference type="GO" id="GO:0045893">
    <property type="term" value="P:positive regulation of DNA-templated transcription"/>
    <property type="evidence" value="ECO:0000315"/>
    <property type="project" value="UniProtKB"/>
</dbReference>
<dbReference type="GO" id="GO:0010498">
    <property type="term" value="P:proteasomal protein catabolic process"/>
    <property type="evidence" value="ECO:0000314"/>
    <property type="project" value="UniProtKB"/>
</dbReference>
<dbReference type="GO" id="GO:0031648">
    <property type="term" value="P:protein destabilization"/>
    <property type="evidence" value="ECO:0000315"/>
    <property type="project" value="UniProtKB"/>
</dbReference>
<dbReference type="GO" id="GO:0042752">
    <property type="term" value="P:regulation of circadian rhythm"/>
    <property type="evidence" value="ECO:0000315"/>
    <property type="project" value="UniProtKB"/>
</dbReference>
<dbReference type="GO" id="GO:0042749">
    <property type="term" value="P:regulation of circadian sleep/wake cycle"/>
    <property type="evidence" value="ECO:0000315"/>
    <property type="project" value="UniProtKB"/>
</dbReference>
<dbReference type="GO" id="GO:0006355">
    <property type="term" value="P:regulation of DNA-templated transcription"/>
    <property type="evidence" value="ECO:0000314"/>
    <property type="project" value="MGI"/>
</dbReference>
<dbReference type="GO" id="GO:0045598">
    <property type="term" value="P:regulation of fat cell differentiation"/>
    <property type="evidence" value="ECO:0000315"/>
    <property type="project" value="UniProtKB"/>
</dbReference>
<dbReference type="GO" id="GO:0061178">
    <property type="term" value="P:regulation of insulin secretion involved in cellular response to glucose stimulus"/>
    <property type="evidence" value="ECO:0000315"/>
    <property type="project" value="UniProtKB"/>
</dbReference>
<dbReference type="GO" id="GO:0019216">
    <property type="term" value="P:regulation of lipid metabolic process"/>
    <property type="evidence" value="ECO:0000315"/>
    <property type="project" value="UniProtKB"/>
</dbReference>
<dbReference type="GO" id="GO:0061469">
    <property type="term" value="P:regulation of type B pancreatic cell proliferation"/>
    <property type="evidence" value="ECO:0000315"/>
    <property type="project" value="UniProtKB"/>
</dbReference>
<dbReference type="GO" id="GO:0044321">
    <property type="term" value="P:response to leptin"/>
    <property type="evidence" value="ECO:0000314"/>
    <property type="project" value="UniProtKB"/>
</dbReference>
<dbReference type="CDD" id="cd07166">
    <property type="entry name" value="NR_DBD_REV_ERB"/>
    <property type="match status" value="1"/>
</dbReference>
<dbReference type="FunFam" id="1.10.565.10:FF:000016">
    <property type="entry name" value="Nuclear receptor subfamily 1 group D member 2"/>
    <property type="match status" value="1"/>
</dbReference>
<dbReference type="FunFam" id="3.30.50.10:FF:000013">
    <property type="entry name" value="Nuclear receptor subfamily 1 group D member 2"/>
    <property type="match status" value="1"/>
</dbReference>
<dbReference type="Gene3D" id="3.30.50.10">
    <property type="entry name" value="Erythroid Transcription Factor GATA-1, subunit A"/>
    <property type="match status" value="1"/>
</dbReference>
<dbReference type="Gene3D" id="1.10.565.10">
    <property type="entry name" value="Retinoid X Receptor"/>
    <property type="match status" value="1"/>
</dbReference>
<dbReference type="InterPro" id="IPR035500">
    <property type="entry name" value="NHR-like_dom_sf"/>
</dbReference>
<dbReference type="InterPro" id="IPR000536">
    <property type="entry name" value="Nucl_hrmn_rcpt_lig-bd"/>
</dbReference>
<dbReference type="InterPro" id="IPR050234">
    <property type="entry name" value="Nuclear_hormone_rcpt_NR1"/>
</dbReference>
<dbReference type="InterPro" id="IPR001723">
    <property type="entry name" value="Nuclear_hrmn_rcpt"/>
</dbReference>
<dbReference type="InterPro" id="IPR001628">
    <property type="entry name" value="Znf_hrmn_rcpt"/>
</dbReference>
<dbReference type="InterPro" id="IPR013088">
    <property type="entry name" value="Znf_NHR/GATA"/>
</dbReference>
<dbReference type="PANTHER" id="PTHR24082">
    <property type="entry name" value="NUCLEAR HORMONE RECEPTOR"/>
    <property type="match status" value="1"/>
</dbReference>
<dbReference type="PANTHER" id="PTHR24082:SF113">
    <property type="entry name" value="NUCLEAR RECEPTOR SUBFAMILY 1 GROUP D MEMBER 1"/>
    <property type="match status" value="1"/>
</dbReference>
<dbReference type="Pfam" id="PF00104">
    <property type="entry name" value="Hormone_recep"/>
    <property type="match status" value="1"/>
</dbReference>
<dbReference type="Pfam" id="PF00105">
    <property type="entry name" value="zf-C4"/>
    <property type="match status" value="1"/>
</dbReference>
<dbReference type="PRINTS" id="PR00398">
    <property type="entry name" value="STRDHORMONER"/>
</dbReference>
<dbReference type="PRINTS" id="PR00047">
    <property type="entry name" value="STROIDFINGER"/>
</dbReference>
<dbReference type="SMART" id="SM00430">
    <property type="entry name" value="HOLI"/>
    <property type="match status" value="1"/>
</dbReference>
<dbReference type="SMART" id="SM00399">
    <property type="entry name" value="ZnF_C4"/>
    <property type="match status" value="1"/>
</dbReference>
<dbReference type="SUPFAM" id="SSF57716">
    <property type="entry name" value="Glucocorticoid receptor-like (DNA-binding domain)"/>
    <property type="match status" value="1"/>
</dbReference>
<dbReference type="SUPFAM" id="SSF48508">
    <property type="entry name" value="Nuclear receptor ligand-binding domain"/>
    <property type="match status" value="1"/>
</dbReference>
<dbReference type="PROSITE" id="PS51843">
    <property type="entry name" value="NR_LBD"/>
    <property type="match status" value="1"/>
</dbReference>
<dbReference type="PROSITE" id="PS00031">
    <property type="entry name" value="NUCLEAR_REC_DBD_1"/>
    <property type="match status" value="1"/>
</dbReference>
<dbReference type="PROSITE" id="PS51030">
    <property type="entry name" value="NUCLEAR_REC_DBD_2"/>
    <property type="match status" value="1"/>
</dbReference>
<keyword id="KW-0007">Acetylation</keyword>
<keyword id="KW-0010">Activator</keyword>
<keyword id="KW-0090">Biological rhythms</keyword>
<keyword id="KW-0966">Cell projection</keyword>
<keyword id="KW-0963">Cytoplasm</keyword>
<keyword id="KW-0221">Differentiation</keyword>
<keyword id="KW-0238">DNA-binding</keyword>
<keyword id="KW-0349">Heme</keyword>
<keyword id="KW-0408">Iron</keyword>
<keyword id="KW-0479">Metal-binding</keyword>
<keyword id="KW-0539">Nucleus</keyword>
<keyword id="KW-0597">Phosphoprotein</keyword>
<keyword id="KW-0675">Receptor</keyword>
<keyword id="KW-1185">Reference proteome</keyword>
<keyword id="KW-0678">Repressor</keyword>
<keyword id="KW-0770">Synapse</keyword>
<keyword id="KW-0804">Transcription</keyword>
<keyword id="KW-0805">Transcription regulation</keyword>
<keyword id="KW-0832">Ubl conjugation</keyword>
<keyword id="KW-0862">Zinc</keyword>
<keyword id="KW-0863">Zinc-finger</keyword>
<gene>
    <name type="primary">Nr1d1</name>
    <name type="synonym">Ear1</name>
</gene>
<evidence type="ECO:0000250" key="1"/>
<evidence type="ECO:0000250" key="2">
    <source>
        <dbReference type="UniProtKB" id="P20393"/>
    </source>
</evidence>
<evidence type="ECO:0000255" key="3">
    <source>
        <dbReference type="PROSITE-ProRule" id="PRU00407"/>
    </source>
</evidence>
<evidence type="ECO:0000255" key="4">
    <source>
        <dbReference type="PROSITE-ProRule" id="PRU01189"/>
    </source>
</evidence>
<evidence type="ECO:0000256" key="5">
    <source>
        <dbReference type="SAM" id="MobiDB-lite"/>
    </source>
</evidence>
<evidence type="ECO:0000269" key="6">
    <source>
    </source>
</evidence>
<evidence type="ECO:0000269" key="7">
    <source>
    </source>
</evidence>
<evidence type="ECO:0000269" key="8">
    <source>
    </source>
</evidence>
<evidence type="ECO:0000269" key="9">
    <source>
    </source>
</evidence>
<evidence type="ECO:0000269" key="10">
    <source>
    </source>
</evidence>
<evidence type="ECO:0000269" key="11">
    <source>
    </source>
</evidence>
<evidence type="ECO:0000269" key="12">
    <source>
    </source>
</evidence>
<evidence type="ECO:0000269" key="13">
    <source>
    </source>
</evidence>
<evidence type="ECO:0000269" key="14">
    <source>
    </source>
</evidence>
<evidence type="ECO:0000269" key="15">
    <source>
    </source>
</evidence>
<evidence type="ECO:0000269" key="16">
    <source>
    </source>
</evidence>
<evidence type="ECO:0000269" key="17">
    <source>
    </source>
</evidence>
<evidence type="ECO:0000269" key="18">
    <source>
    </source>
</evidence>
<evidence type="ECO:0000269" key="19">
    <source>
    </source>
</evidence>
<evidence type="ECO:0000269" key="20">
    <source>
    </source>
</evidence>
<evidence type="ECO:0000269" key="21">
    <source>
    </source>
</evidence>
<evidence type="ECO:0000269" key="22">
    <source>
    </source>
</evidence>
<evidence type="ECO:0000269" key="23">
    <source>
    </source>
</evidence>
<evidence type="ECO:0000269" key="24">
    <source>
    </source>
</evidence>
<evidence type="ECO:0000269" key="25">
    <source>
    </source>
</evidence>
<evidence type="ECO:0000269" key="26">
    <source>
    </source>
</evidence>
<evidence type="ECO:0000269" key="27">
    <source>
    </source>
</evidence>
<evidence type="ECO:0000269" key="28">
    <source>
    </source>
</evidence>
<evidence type="ECO:0000269" key="29">
    <source>
    </source>
</evidence>
<evidence type="ECO:0000269" key="30">
    <source>
    </source>
</evidence>
<evidence type="ECO:0000269" key="31">
    <source>
    </source>
</evidence>
<evidence type="ECO:0000269" key="32">
    <source>
    </source>
</evidence>
<evidence type="ECO:0000269" key="33">
    <source>
    </source>
</evidence>
<evidence type="ECO:0000269" key="34">
    <source>
    </source>
</evidence>
<evidence type="ECO:0000269" key="35">
    <source>
    </source>
</evidence>
<evidence type="ECO:0000269" key="36">
    <source>
    </source>
</evidence>
<evidence type="ECO:0000269" key="37">
    <source>
    </source>
</evidence>
<evidence type="ECO:0000269" key="38">
    <source>
    </source>
</evidence>
<evidence type="ECO:0000269" key="39">
    <source>
    </source>
</evidence>
<evidence type="ECO:0000269" key="40">
    <source>
    </source>
</evidence>
<evidence type="ECO:0000269" key="41">
    <source>
    </source>
</evidence>
<evidence type="ECO:0000269" key="42">
    <source>
    </source>
</evidence>
<evidence type="ECO:0000305" key="43"/>
<feature type="chain" id="PRO_0000311182" description="Nuclear receptor subfamily 1 group D member 1">
    <location>
        <begin position="1"/>
        <end position="615"/>
    </location>
</feature>
<feature type="domain" description="NR LBD" evidence="4">
    <location>
        <begin position="285"/>
        <end position="615"/>
    </location>
</feature>
<feature type="DNA-binding region" description="Nuclear receptor" evidence="3">
    <location>
        <begin position="130"/>
        <end position="206"/>
    </location>
</feature>
<feature type="zinc finger region" description="NR C4-type" evidence="3">
    <location>
        <begin position="133"/>
        <end position="153"/>
    </location>
</feature>
<feature type="zinc finger region" description="NR C4-type" evidence="3">
    <location>
        <begin position="170"/>
        <end position="194"/>
    </location>
</feature>
<feature type="region of interest" description="Modulating">
    <location>
        <begin position="1"/>
        <end position="129"/>
    </location>
</feature>
<feature type="region of interest" description="Disordered" evidence="5">
    <location>
        <begin position="1"/>
        <end position="120"/>
    </location>
</feature>
<feature type="region of interest" description="Required for phosphorylation by CSNK1E and cytoplasmic localization" evidence="40">
    <location>
        <begin position="1"/>
        <end position="70"/>
    </location>
</feature>
<feature type="region of interest" description="Crucial for activation of GJA1">
    <location>
        <begin position="49"/>
        <end position="285"/>
    </location>
</feature>
<feature type="region of interest" description="Disordered" evidence="5">
    <location>
        <begin position="235"/>
        <end position="286"/>
    </location>
</feature>
<feature type="region of interest" description="Disordered" evidence="5">
    <location>
        <begin position="312"/>
        <end position="337"/>
    </location>
</feature>
<feature type="compositionally biased region" description="Polar residues" evidence="5">
    <location>
        <begin position="1"/>
        <end position="12"/>
    </location>
</feature>
<feature type="compositionally biased region" description="Low complexity" evidence="5">
    <location>
        <begin position="14"/>
        <end position="34"/>
    </location>
</feature>
<feature type="compositionally biased region" description="Polar residues" evidence="5">
    <location>
        <begin position="35"/>
        <end position="48"/>
    </location>
</feature>
<feature type="compositionally biased region" description="Low complexity" evidence="5">
    <location>
        <begin position="70"/>
        <end position="94"/>
    </location>
</feature>
<feature type="compositionally biased region" description="Low complexity" evidence="5">
    <location>
        <begin position="240"/>
        <end position="252"/>
    </location>
</feature>
<feature type="compositionally biased region" description="Pro residues" evidence="5">
    <location>
        <begin position="253"/>
        <end position="262"/>
    </location>
</feature>
<feature type="compositionally biased region" description="Polar residues" evidence="5">
    <location>
        <begin position="312"/>
        <end position="328"/>
    </location>
</feature>
<feature type="binding site" evidence="1">
    <location>
        <position position="419"/>
    </location>
    <ligand>
        <name>heme</name>
        <dbReference type="ChEBI" id="CHEBI:30413"/>
    </ligand>
</feature>
<feature type="binding site" evidence="1">
    <location>
        <position position="603"/>
    </location>
    <ligand>
        <name>heme</name>
        <dbReference type="ChEBI" id="CHEBI:30413"/>
    </ligand>
</feature>
<feature type="modified residue" description="Phosphoserine; by GSK3-beta" evidence="2">
    <location>
        <position position="55"/>
    </location>
</feature>
<feature type="modified residue" description="Phosphoserine; by GSK3-beta" evidence="2">
    <location>
        <position position="59"/>
    </location>
</feature>
<feature type="modified residue" description="N6-acetyllysine; by KAT5" evidence="1">
    <location>
        <position position="192"/>
    </location>
</feature>
<feature type="modified residue" description="N6-acetyllysine; by KAT5" evidence="1">
    <location>
        <position position="193"/>
    </location>
</feature>
<feature type="modified residue" description="Phosphothreonine; by CDK1" evidence="32">
    <location>
        <position position="275"/>
    </location>
</feature>
<feature type="modified residue" description="N6-acetyllysine" evidence="2">
    <location>
        <position position="592"/>
    </location>
</feature>
<feature type="mutagenesis site" description="Loss of interaction with FBXW7 and loss of CDK1-mediated phosphorylation." evidence="32">
    <original>T</original>
    <variation>A</variation>
    <location>
        <position position="275"/>
    </location>
</feature>
<feature type="mutagenesis site" description="Loss of interaction with FBXW7." evidence="32">
    <original>S</original>
    <variation>A</variation>
    <location>
        <position position="279"/>
    </location>
</feature>
<feature type="mutagenesis site" description="Reduces interaction with PER2 by 60%." evidence="12">
    <original>K</original>
    <variation>A</variation>
    <location>
        <position position="456"/>
    </location>
</feature>
<feature type="sequence conflict" description="In Ref. 5; CAA59997." evidence="43" ref="5">
    <original>S</original>
    <variation>R</variation>
    <location>
        <position position="36"/>
    </location>
</feature>
<feature type="sequence conflict" description="In Ref. 5; CAA59997." evidence="43" ref="5">
    <original>S</original>
    <variation>R</variation>
    <location>
        <position position="40"/>
    </location>
</feature>
<feature type="sequence conflict" description="In Ref. 1; BAE27164 and 3; AAH08989." evidence="43" ref="1 3">
    <original>A</original>
    <variation>T</variation>
    <location>
        <position position="84"/>
    </location>
</feature>
<feature type="sequence conflict" description="In Ref. 1; BAE27164." evidence="43" ref="1">
    <original>F</original>
    <variation>L</variation>
    <location>
        <position position="440"/>
    </location>
</feature>
<name>NR1D1_MOUSE</name>
<accession>Q3UV55</accession>
<accession>Q3UJJ1</accession>
<accession>Q62171</accession>
<accession>Q6EEZ6</accession>
<accession>Q922A5</accession>
<accession>Q9ESY4</accession>
<organism>
    <name type="scientific">Mus musculus</name>
    <name type="common">Mouse</name>
    <dbReference type="NCBI Taxonomy" id="10090"/>
    <lineage>
        <taxon>Eukaryota</taxon>
        <taxon>Metazoa</taxon>
        <taxon>Chordata</taxon>
        <taxon>Craniata</taxon>
        <taxon>Vertebrata</taxon>
        <taxon>Euteleostomi</taxon>
        <taxon>Mammalia</taxon>
        <taxon>Eutheria</taxon>
        <taxon>Euarchontoglires</taxon>
        <taxon>Glires</taxon>
        <taxon>Rodentia</taxon>
        <taxon>Myomorpha</taxon>
        <taxon>Muroidea</taxon>
        <taxon>Muridae</taxon>
        <taxon>Murinae</taxon>
        <taxon>Mus</taxon>
        <taxon>Mus</taxon>
    </lineage>
</organism>
<proteinExistence type="evidence at protein level"/>
<reference key="1">
    <citation type="journal article" date="2005" name="Science">
        <title>The transcriptional landscape of the mammalian genome.</title>
        <authorList>
            <person name="Carninci P."/>
            <person name="Kasukawa T."/>
            <person name="Katayama S."/>
            <person name="Gough J."/>
            <person name="Frith M.C."/>
            <person name="Maeda N."/>
            <person name="Oyama R."/>
            <person name="Ravasi T."/>
            <person name="Lenhard B."/>
            <person name="Wells C."/>
            <person name="Kodzius R."/>
            <person name="Shimokawa K."/>
            <person name="Bajic V.B."/>
            <person name="Brenner S.E."/>
            <person name="Batalov S."/>
            <person name="Forrest A.R."/>
            <person name="Zavolan M."/>
            <person name="Davis M.J."/>
            <person name="Wilming L.G."/>
            <person name="Aidinis V."/>
            <person name="Allen J.E."/>
            <person name="Ambesi-Impiombato A."/>
            <person name="Apweiler R."/>
            <person name="Aturaliya R.N."/>
            <person name="Bailey T.L."/>
            <person name="Bansal M."/>
            <person name="Baxter L."/>
            <person name="Beisel K.W."/>
            <person name="Bersano T."/>
            <person name="Bono H."/>
            <person name="Chalk A.M."/>
            <person name="Chiu K.P."/>
            <person name="Choudhary V."/>
            <person name="Christoffels A."/>
            <person name="Clutterbuck D.R."/>
            <person name="Crowe M.L."/>
            <person name="Dalla E."/>
            <person name="Dalrymple B.P."/>
            <person name="de Bono B."/>
            <person name="Della Gatta G."/>
            <person name="di Bernardo D."/>
            <person name="Down T."/>
            <person name="Engstrom P."/>
            <person name="Fagiolini M."/>
            <person name="Faulkner G."/>
            <person name="Fletcher C.F."/>
            <person name="Fukushima T."/>
            <person name="Furuno M."/>
            <person name="Futaki S."/>
            <person name="Gariboldi M."/>
            <person name="Georgii-Hemming P."/>
            <person name="Gingeras T.R."/>
            <person name="Gojobori T."/>
            <person name="Green R.E."/>
            <person name="Gustincich S."/>
            <person name="Harbers M."/>
            <person name="Hayashi Y."/>
            <person name="Hensch T.K."/>
            <person name="Hirokawa N."/>
            <person name="Hill D."/>
            <person name="Huminiecki L."/>
            <person name="Iacono M."/>
            <person name="Ikeo K."/>
            <person name="Iwama A."/>
            <person name="Ishikawa T."/>
            <person name="Jakt M."/>
            <person name="Kanapin A."/>
            <person name="Katoh M."/>
            <person name="Kawasawa Y."/>
            <person name="Kelso J."/>
            <person name="Kitamura H."/>
            <person name="Kitano H."/>
            <person name="Kollias G."/>
            <person name="Krishnan S.P."/>
            <person name="Kruger A."/>
            <person name="Kummerfeld S.K."/>
            <person name="Kurochkin I.V."/>
            <person name="Lareau L.F."/>
            <person name="Lazarevic D."/>
            <person name="Lipovich L."/>
            <person name="Liu J."/>
            <person name="Liuni S."/>
            <person name="McWilliam S."/>
            <person name="Madan Babu M."/>
            <person name="Madera M."/>
            <person name="Marchionni L."/>
            <person name="Matsuda H."/>
            <person name="Matsuzawa S."/>
            <person name="Miki H."/>
            <person name="Mignone F."/>
            <person name="Miyake S."/>
            <person name="Morris K."/>
            <person name="Mottagui-Tabar S."/>
            <person name="Mulder N."/>
            <person name="Nakano N."/>
            <person name="Nakauchi H."/>
            <person name="Ng P."/>
            <person name="Nilsson R."/>
            <person name="Nishiguchi S."/>
            <person name="Nishikawa S."/>
            <person name="Nori F."/>
            <person name="Ohara O."/>
            <person name="Okazaki Y."/>
            <person name="Orlando V."/>
            <person name="Pang K.C."/>
            <person name="Pavan W.J."/>
            <person name="Pavesi G."/>
            <person name="Pesole G."/>
            <person name="Petrovsky N."/>
            <person name="Piazza S."/>
            <person name="Reed J."/>
            <person name="Reid J.F."/>
            <person name="Ring B.Z."/>
            <person name="Ringwald M."/>
            <person name="Rost B."/>
            <person name="Ruan Y."/>
            <person name="Salzberg S.L."/>
            <person name="Sandelin A."/>
            <person name="Schneider C."/>
            <person name="Schoenbach C."/>
            <person name="Sekiguchi K."/>
            <person name="Semple C.A."/>
            <person name="Seno S."/>
            <person name="Sessa L."/>
            <person name="Sheng Y."/>
            <person name="Shibata Y."/>
            <person name="Shimada H."/>
            <person name="Shimada K."/>
            <person name="Silva D."/>
            <person name="Sinclair B."/>
            <person name="Sperling S."/>
            <person name="Stupka E."/>
            <person name="Sugiura K."/>
            <person name="Sultana R."/>
            <person name="Takenaka Y."/>
            <person name="Taki K."/>
            <person name="Tammoja K."/>
            <person name="Tan S.L."/>
            <person name="Tang S."/>
            <person name="Taylor M.S."/>
            <person name="Tegner J."/>
            <person name="Teichmann S.A."/>
            <person name="Ueda H.R."/>
            <person name="van Nimwegen E."/>
            <person name="Verardo R."/>
            <person name="Wei C.L."/>
            <person name="Yagi K."/>
            <person name="Yamanishi H."/>
            <person name="Zabarovsky E."/>
            <person name="Zhu S."/>
            <person name="Zimmer A."/>
            <person name="Hide W."/>
            <person name="Bult C."/>
            <person name="Grimmond S.M."/>
            <person name="Teasdale R.D."/>
            <person name="Liu E.T."/>
            <person name="Brusic V."/>
            <person name="Quackenbush J."/>
            <person name="Wahlestedt C."/>
            <person name="Mattick J.S."/>
            <person name="Hume D.A."/>
            <person name="Kai C."/>
            <person name="Sasaki D."/>
            <person name="Tomaru Y."/>
            <person name="Fukuda S."/>
            <person name="Kanamori-Katayama M."/>
            <person name="Suzuki M."/>
            <person name="Aoki J."/>
            <person name="Arakawa T."/>
            <person name="Iida J."/>
            <person name="Imamura K."/>
            <person name="Itoh M."/>
            <person name="Kato T."/>
            <person name="Kawaji H."/>
            <person name="Kawagashira N."/>
            <person name="Kawashima T."/>
            <person name="Kojima M."/>
            <person name="Kondo S."/>
            <person name="Konno H."/>
            <person name="Nakano K."/>
            <person name="Ninomiya N."/>
            <person name="Nishio T."/>
            <person name="Okada M."/>
            <person name="Plessy C."/>
            <person name="Shibata K."/>
            <person name="Shiraki T."/>
            <person name="Suzuki S."/>
            <person name="Tagami M."/>
            <person name="Waki K."/>
            <person name="Watahiki A."/>
            <person name="Okamura-Oho Y."/>
            <person name="Suzuki H."/>
            <person name="Kawai J."/>
            <person name="Hayashizaki Y."/>
        </authorList>
    </citation>
    <scope>NUCLEOTIDE SEQUENCE [LARGE SCALE MRNA]</scope>
    <source>
        <strain>C57BL/6J</strain>
        <strain>DBA/2J</strain>
        <strain>NOD</strain>
        <tissue>Bone</tissue>
        <tissue>Cerebellum</tissue>
    </source>
</reference>
<reference key="2">
    <citation type="journal article" date="2009" name="PLoS Biol.">
        <title>Lineage-specific biology revealed by a finished genome assembly of the mouse.</title>
        <authorList>
            <person name="Church D.M."/>
            <person name="Goodstadt L."/>
            <person name="Hillier L.W."/>
            <person name="Zody M.C."/>
            <person name="Goldstein S."/>
            <person name="She X."/>
            <person name="Bult C.J."/>
            <person name="Agarwala R."/>
            <person name="Cherry J.L."/>
            <person name="DiCuccio M."/>
            <person name="Hlavina W."/>
            <person name="Kapustin Y."/>
            <person name="Meric P."/>
            <person name="Maglott D."/>
            <person name="Birtle Z."/>
            <person name="Marques A.C."/>
            <person name="Graves T."/>
            <person name="Zhou S."/>
            <person name="Teague B."/>
            <person name="Potamousis K."/>
            <person name="Churas C."/>
            <person name="Place M."/>
            <person name="Herschleb J."/>
            <person name="Runnheim R."/>
            <person name="Forrest D."/>
            <person name="Amos-Landgraf J."/>
            <person name="Schwartz D.C."/>
            <person name="Cheng Z."/>
            <person name="Lindblad-Toh K."/>
            <person name="Eichler E.E."/>
            <person name="Ponting C.P."/>
        </authorList>
    </citation>
    <scope>NUCLEOTIDE SEQUENCE [LARGE SCALE GENOMIC DNA]</scope>
    <source>
        <strain>C57BL/6J</strain>
    </source>
</reference>
<reference key="3">
    <citation type="journal article" date="2004" name="Genome Res.">
        <title>The status, quality, and expansion of the NIH full-length cDNA project: the Mammalian Gene Collection (MGC).</title>
        <authorList>
            <consortium name="The MGC Project Team"/>
        </authorList>
    </citation>
    <scope>NUCLEOTIDE SEQUENCE [LARGE SCALE MRNA]</scope>
    <source>
        <strain>FVB/N</strain>
        <tissue>Mammary tumor</tissue>
    </source>
</reference>
<reference key="4">
    <citation type="submission" date="2000-08" db="EMBL/GenBank/DDBJ databases">
        <authorList>
            <person name="Sadek M.M."/>
            <person name="Chen Y."/>
            <person name="Elbrecht A."/>
        </authorList>
    </citation>
    <scope>NUCLEOTIDE SEQUENCE [MRNA] OF 1-186</scope>
    <source>
        <strain>BALB/cJ</strain>
        <tissue>Liver</tissue>
    </source>
</reference>
<reference key="5">
    <citation type="submission" date="1995-04" db="EMBL/GenBank/DDBJ databases">
        <authorList>
            <person name="Chomez P."/>
            <person name="Vennstrom B."/>
        </authorList>
    </citation>
    <scope>NUCLEOTIDE SEQUENCE [MRNA] OF 1-55</scope>
    <source>
        <strain>BALB/cJ</strain>
        <tissue>Skeletal muscle</tissue>
    </source>
</reference>
<reference key="6">
    <citation type="journal article" date="2004" name="J. Mol. Endocrinol.">
        <title>The orphan receptor Rev-erbalpha gene is a target of the circadian clock pacemaker.</title>
        <authorList>
            <person name="Triqueneaux G."/>
            <person name="Thenot S."/>
            <person name="Kakizawa T."/>
            <person name="Antoch M.P."/>
            <person name="Safi R."/>
            <person name="Takahashi J.S."/>
            <person name="Delaunay F."/>
            <person name="Laudet V."/>
        </authorList>
    </citation>
    <scope>NUCLEOTIDE SEQUENCE [GENOMIC DNA] OF 1-40</scope>
    <source>
        <strain>C57BL/6N</strain>
    </source>
</reference>
<reference key="7">
    <citation type="journal article" date="1997" name="Proc. Natl. Acad. Sci. U.S.A.">
        <title>Cloning and characterization of a corepressor and potential component of the nuclear hormone receptor repression complex.</title>
        <authorList>
            <person name="Zamir I."/>
            <person name="Dawson J."/>
            <person name="Lavinsky R.M."/>
            <person name="Glass C.K."/>
            <person name="Rosenfeld M.G."/>
            <person name="Lazar M.A."/>
        </authorList>
    </citation>
    <scope>INTERACTION WITH C1D</scope>
</reference>
<reference key="8">
    <citation type="journal article" date="2004" name="J. Biol. Chem.">
        <title>Histone acetyltransferase-dependent chromatin remodeling and the vascular clock.</title>
        <authorList>
            <person name="Curtis A.M."/>
            <person name="Seo S.B."/>
            <person name="Westgate E.J."/>
            <person name="Rudic R.D."/>
            <person name="Smyth E.M."/>
            <person name="Chakravarti D."/>
            <person name="FitzGerald G.A."/>
            <person name="McNamara P."/>
        </authorList>
    </citation>
    <scope>INDUCTION</scope>
</reference>
<reference key="9">
    <citation type="journal article" date="2008" name="Gastroenterology">
        <title>Regulation of bile acid synthesis by the nuclear receptor Rev-erbalpha.</title>
        <authorList>
            <person name="Duez H."/>
            <person name="van der Veen J.N."/>
            <person name="Duhem C."/>
            <person name="Pourcet B."/>
            <person name="Touvier T."/>
            <person name="Fontaine C."/>
            <person name="Derudas B."/>
            <person name="Bauge E."/>
            <person name="Havinga R."/>
            <person name="Bloks V.W."/>
            <person name="Wolters H."/>
            <person name="van der Sluijs F.H."/>
            <person name="Vennstrom B."/>
            <person name="Kuipers F."/>
            <person name="Staels B."/>
        </authorList>
    </citation>
    <scope>FUNCTION</scope>
</reference>
<reference key="10">
    <citation type="journal article" date="2008" name="Mol. Cell. Biol.">
        <title>Bifunctional role of Rev-erbalpha in adipocyte differentiation.</title>
        <authorList>
            <person name="Wang J."/>
            <person name="Lazar M.A."/>
        </authorList>
    </citation>
    <scope>FUNCTION</scope>
    <scope>TISSUE SPECIFICITY</scope>
    <scope>PROTEASOMAL DEGRADATION</scope>
</reference>
<reference key="11">
    <citation type="journal article" date="2008" name="PLoS Genet.">
        <title>Redundant function of REV-ERBalpha and beta and non-essential role for Bmal1 cycling in transcriptional regulation of intracellular circadian rhythms.</title>
        <authorList>
            <person name="Liu A.C."/>
            <person name="Tran H.G."/>
            <person name="Zhang E.E."/>
            <person name="Priest A.A."/>
            <person name="Welsh D.K."/>
            <person name="Kay S.A."/>
        </authorList>
    </citation>
    <scope>FUNCTION</scope>
    <scope>TISSUE SPECIFICITY</scope>
</reference>
<reference key="12">
    <citation type="journal article" date="2009" name="Genes Dev.">
        <title>Negative feedback maintenance of heme homeostasis by its receptor, Rev-erbalpha.</title>
        <authorList>
            <person name="Wu N."/>
            <person name="Yin L."/>
            <person name="Hanniman E.A."/>
            <person name="Joshi S."/>
            <person name="Lazar M.A."/>
        </authorList>
    </citation>
    <scope>FUNCTION</scope>
</reference>
<reference key="13">
    <citation type="journal article" date="2009" name="PLoS Biol.">
        <title>REV-ERBalpha participates in circadian SREBP signaling and bile acid homeostasis.</title>
        <authorList>
            <person name="Le Martelot G."/>
            <person name="Claudel T."/>
            <person name="Gatfield D."/>
            <person name="Schaad O."/>
            <person name="Kornmann B."/>
            <person name="Lo Sasso G."/>
            <person name="Moschetta A."/>
            <person name="Schibler U."/>
        </authorList>
    </citation>
    <scope>FUNCTION</scope>
</reference>
<reference key="14">
    <citation type="journal article" date="2010" name="Genes Dev.">
        <title>The mammalian clock component PERIOD2 coordinates circadian output by interaction with nuclear receptors.</title>
        <authorList>
            <person name="Schmutz I."/>
            <person name="Ripperger J.A."/>
            <person name="Baeriswyl-Aebischer S."/>
            <person name="Albrecht U."/>
        </authorList>
    </citation>
    <scope>FUNCTION IN CIRCADIAN RHYTHMS</scope>
    <scope>INTERACTION WITH PER2</scope>
    <scope>DISRUPTION PHENOTYPE</scope>
    <scope>MUTAGENESIS OF LYS-456</scope>
</reference>
<reference key="15">
    <citation type="journal article" date="2010" name="Proc. Natl. Acad. Sci. U.S.A.">
        <title>E3 ligases Arf-bp1 and Pam mediate lithium-stimulated degradation of the circadian heme receptor Rev-erb alpha.</title>
        <authorList>
            <person name="Yin L."/>
            <person name="Joshi S."/>
            <person name="Wu N."/>
            <person name="Tong X."/>
            <person name="Lazar M.A."/>
        </authorList>
    </citation>
    <scope>UBIQUITINATION AND PROTEASOMAL DEGRADATION</scope>
</reference>
<reference key="16">
    <citation type="journal article" date="2011" name="Nat. Neurosci.">
        <title>A circadian clock in hippocampus is regulated by interaction between oligophrenin-1 and Rev-erbalpha.</title>
        <authorList>
            <person name="Valnegri P."/>
            <person name="Khelfaoui M."/>
            <person name="Dorseuil O."/>
            <person name="Bassani S."/>
            <person name="Lagneaux C."/>
            <person name="Gianfelice A."/>
            <person name="Benfante R."/>
            <person name="Chelly J."/>
            <person name="Billuart P."/>
            <person name="Sala C."/>
            <person name="Passafaro M."/>
        </authorList>
    </citation>
    <scope>FUNCTION</scope>
    <scope>SUBCELLULAR LOCATION</scope>
    <scope>INTERACTION WITH OPHN1</scope>
    <scope>PROTEASOMAL DEGRADATION</scope>
    <scope>TISSUE SPECIFICITY</scope>
</reference>
<reference key="17">
    <citation type="journal article" date="2011" name="Nature">
        <title>Cryptochromes mediate rhythmic repression of the glucocorticoid receptor.</title>
        <authorList>
            <person name="Lamia K.A."/>
            <person name="Papp S.J."/>
            <person name="Yu R.T."/>
            <person name="Barish G.D."/>
            <person name="Uhlenhaut N.H."/>
            <person name="Jonker J.W."/>
            <person name="Downes M."/>
            <person name="Evans R.M."/>
        </authorList>
    </citation>
    <scope>INTERACTION WITH PER2</scope>
</reference>
<reference key="18">
    <citation type="journal article" date="2011" name="PLoS ONE">
        <title>Nuclear receptor Rev-erb alpha (Nr1d1) functions in concert with Nr2e3 to regulate transcriptional networks in the retina.</title>
        <authorList>
            <person name="Mollema N.J."/>
            <person name="Yuan Y."/>
            <person name="Jelcick A.S."/>
            <person name="Sachs A.J."/>
            <person name="von Alpen D."/>
            <person name="Schorderet D."/>
            <person name="Escher P."/>
            <person name="Haider N.B."/>
        </authorList>
    </citation>
    <scope>FUNCTION</scope>
    <scope>TISSUE SPECIFICITY</scope>
    <scope>DEVELOPMENTAL STAGE</scope>
    <scope>DISRUPTION PHENOTYPE</scope>
</reference>
<reference key="19">
    <citation type="journal article" date="2012" name="Endocrinology">
        <title>The clock gene Rev-erbalpha regulates pancreatic beta-cell function: modulation by leptin and high-fat diet.</title>
        <authorList>
            <person name="Vieira E."/>
            <person name="Marroqui L."/>
            <person name="Batista T.M."/>
            <person name="Caballero-Garrido E."/>
            <person name="Carneiro E.M."/>
            <person name="Boschero A.C."/>
            <person name="Nadal A."/>
            <person name="Quesada I."/>
        </authorList>
    </citation>
    <scope>FUNCTION</scope>
    <scope>TISSUE SPECIFICITY</scope>
</reference>
<reference key="20">
    <citation type="journal article" date="2012" name="Genes Dev.">
        <title>Rev-erbalpha and Rev-erbbeta coordinately protect the circadian clock and normal metabolic function.</title>
        <authorList>
            <person name="Bugge A."/>
            <person name="Feng D."/>
            <person name="Everett L.J."/>
            <person name="Briggs E.R."/>
            <person name="Mullican S.E."/>
            <person name="Wang F."/>
            <person name="Jager J."/>
            <person name="Lazar M.A."/>
        </authorList>
    </citation>
    <scope>FUNCTION</scope>
</reference>
<reference key="21">
    <citation type="journal article" date="2012" name="Nat. Commun.">
        <title>Involvement of urinary bladder Connexin43 and the circadian clock in coordination of diurnal micturition rhythm.</title>
        <authorList>
            <person name="Negoro H."/>
            <person name="Kanematsu A."/>
            <person name="Doi M."/>
            <person name="Suadicani S.O."/>
            <person name="Matsuo M."/>
            <person name="Imamura M."/>
            <person name="Okinami T."/>
            <person name="Nishikawa N."/>
            <person name="Oura T."/>
            <person name="Matsui S."/>
            <person name="Seo K."/>
            <person name="Tainaka M."/>
            <person name="Urabe S."/>
            <person name="Kiyokage E."/>
            <person name="Todo T."/>
            <person name="Okamura H."/>
            <person name="Tabata Y."/>
            <person name="Ogawa O."/>
        </authorList>
    </citation>
    <scope>FUNCTION</scope>
    <scope>INTERACTION WITH SP1</scope>
    <scope>INDUCTION</scope>
</reference>
<reference key="22">
    <citation type="journal article" date="2012" name="Proc. Natl. Acad. Sci. U.S.A.">
        <title>The nuclear receptor REV-ERBalpha mediates circadian regulation of innate immunity through selective regulation of inflammatory cytokines.</title>
        <authorList>
            <person name="Gibbs J.E."/>
            <person name="Blaikley J."/>
            <person name="Beesley S."/>
            <person name="Matthews L."/>
            <person name="Simpson K.D."/>
            <person name="Boyce S.H."/>
            <person name="Farrow S.N."/>
            <person name="Else K.J."/>
            <person name="Singh D."/>
            <person name="Ray D.W."/>
            <person name="Loudon A.S."/>
        </authorList>
    </citation>
    <scope>FUNCTION</scope>
</reference>
<reference key="23">
    <citation type="journal article" date="2013" name="Am. J. Physiol.">
        <title>High-fat diet-induced hyperinsulinemia and tissue-specific insulin resistance in Cry-deficient mice.</title>
        <authorList>
            <person name="Barclay J.L."/>
            <person name="Shostak A."/>
            <person name="Leliavski A."/>
            <person name="Tsang A.H."/>
            <person name="Johren O."/>
            <person name="Muller-Fielitz H."/>
            <person name="Landgraf D."/>
            <person name="Naujokat N."/>
            <person name="van der Horst G.T."/>
            <person name="Oster H."/>
        </authorList>
    </citation>
    <scope>TISSUE SPECIFICITY</scope>
    <scope>INDUCTION</scope>
</reference>
<reference key="24">
    <citation type="journal article" date="2013" name="Biochem. J.">
        <title>DBC1 (Deleted in Breast Cancer 1) modulates the stability and function of the nuclear receptor Rev-erbalpha.</title>
        <authorList>
            <person name="Chini C.C."/>
            <person name="Escande C."/>
            <person name="Nin V."/>
            <person name="Chini E.N."/>
        </authorList>
    </citation>
    <scope>INTERACTION WITH CCAR2</scope>
</reference>
<reference key="25">
    <citation type="journal article" date="2013" name="FEBS Lett.">
        <title>Role of Rev-erbalpha domains for transactivation of the connexin43 promoter with Sp1.</title>
        <authorList>
            <person name="Negoro H."/>
            <person name="Okinami T."/>
            <person name="Kanematsu A."/>
            <person name="Imamura M."/>
            <person name="Tabata Y."/>
            <person name="Ogawa O."/>
        </authorList>
    </citation>
    <scope>FUNCTION</scope>
</reference>
<reference key="26">
    <citation type="journal article" date="2013" name="J. Biol. Chem.">
        <title>Transcription factor NF-Y is a functional regulator of the transcription of core clock gene Bmal1.</title>
        <authorList>
            <person name="Xiao J."/>
            <person name="Zhou Y."/>
            <person name="Lai H."/>
            <person name="Lei S."/>
            <person name="Chi L.H."/>
            <person name="Mo X."/>
        </authorList>
    </citation>
    <scope>FUNCTION</scope>
</reference>
<reference key="27">
    <citation type="journal article" date="2013" name="Nat. Med.">
        <title>Rev-erb-alpha modulates skeletal muscle oxidative capacity by regulating mitochondrial biogenesis and autophagy.</title>
        <authorList>
            <person name="Woldt E."/>
            <person name="Sebti Y."/>
            <person name="Solt L.A."/>
            <person name="Duhem C."/>
            <person name="Lancel S."/>
            <person name="Eeckhoute J."/>
            <person name="Hesselink M.K."/>
            <person name="Paquet C."/>
            <person name="Delhaye S."/>
            <person name="Shin Y."/>
            <person name="Kamenecka T.M."/>
            <person name="Schaart G."/>
            <person name="Lefebvre P."/>
            <person name="Neviere R."/>
            <person name="Burris T.P."/>
            <person name="Schrauwen P."/>
            <person name="Staels B."/>
            <person name="Duez H."/>
        </authorList>
    </citation>
    <scope>FUNCTION</scope>
</reference>
<reference key="28">
    <citation type="journal article" date="2013" name="Nature">
        <title>The nuclear receptor Rev-erbalpha controls circadian thermogenic plasticity.</title>
        <authorList>
            <person name="Gerhart-Hines Z."/>
            <person name="Feng D."/>
            <person name="Emmett M.J."/>
            <person name="Everett L.J."/>
            <person name="Loro E."/>
            <person name="Briggs E.R."/>
            <person name="Bugge A."/>
            <person name="Hou C."/>
            <person name="Ferrara C."/>
            <person name="Seale P."/>
            <person name="Pryma D.A."/>
            <person name="Khurana T.S."/>
            <person name="Lazar M.A."/>
        </authorList>
    </citation>
    <scope>FUNCTION</scope>
    <scope>DISRUPTION PHENOTYPE</scope>
</reference>
<reference key="29">
    <citation type="journal article" date="2013" name="Nature">
        <title>Rev-Erbs repress macrophage gene expression by inhibiting enhancer-directed transcription.</title>
        <authorList>
            <person name="Lam M.T."/>
            <person name="Cho H."/>
            <person name="Lesch H.P."/>
            <person name="Gosselin D."/>
            <person name="Heinz S."/>
            <person name="Tanaka-Oishi Y."/>
            <person name="Benner C."/>
            <person name="Kaikkonen M.U."/>
            <person name="Kim A.S."/>
            <person name="Kosaka M."/>
            <person name="Lee C.Y."/>
            <person name="Watt A."/>
            <person name="Grossman T.R."/>
            <person name="Rosenfeld M.G."/>
            <person name="Evans R.M."/>
            <person name="Glass C.K."/>
        </authorList>
    </citation>
    <scope>FUNCTION</scope>
</reference>
<reference key="30">
    <citation type="journal article" date="2013" name="PLoS ONE">
        <title>Involvement of the clock gene Rev-erb alpha in the regulation of glucagon secretion in pancreatic alpha-cells.</title>
        <authorList>
            <person name="Vieira E."/>
            <person name="Marroqui L."/>
            <person name="Figueroa A.L."/>
            <person name="Merino B."/>
            <person name="Fernandez-Ruiz R."/>
            <person name="Nadal A."/>
            <person name="Burris T.P."/>
            <person name="Gomis R."/>
            <person name="Quesada I."/>
        </authorList>
    </citation>
    <scope>FUNCTION</scope>
</reference>
<reference key="31">
    <citation type="journal article" date="2014" name="Exp. Mol. Med.">
        <title>Presence of multiple peripheral circadian oscillators in the tissues controlling voiding function in mice.</title>
        <authorList>
            <person name="Noh J.Y."/>
            <person name="Han D.H."/>
            <person name="Kim M.H."/>
            <person name="Ko I.G."/>
            <person name="Kim S.E."/>
            <person name="Park N."/>
            <person name="Kyoung Choe H."/>
            <person name="Kim K.H."/>
            <person name="Kim K."/>
            <person name="Kim C.J."/>
            <person name="Cho S."/>
        </authorList>
    </citation>
    <scope>INDUCTION</scope>
    <scope>TISSUE SPECIFICITY</scope>
</reference>
<reference key="32">
    <citation type="journal article" date="2014" name="J. Biol. Chem.">
        <title>Circadian regulation of Tshb gene expression by Rev-Erbalpha (NR1D1) and nuclear corepressor 1 (NCOR1).</title>
        <authorList>
            <person name="Aninye I.O."/>
            <person name="Matsumoto S."/>
            <person name="Sidhaye A.R."/>
            <person name="Wondisford F.E."/>
        </authorList>
    </citation>
    <scope>FUNCTION</scope>
</reference>
<reference key="33">
    <citation type="journal article" date="2015" name="Hepatology">
        <title>Small heterodimer partner/neuronal PAS domain protein 2 axis regulates the oscillation of liver lipid metabolism.</title>
        <authorList>
            <person name="Lee S.M."/>
            <person name="Zhang Y."/>
            <person name="Tsuchiya H."/>
            <person name="Smalling R."/>
            <person name="Jetten A.M."/>
            <person name="Wang L."/>
        </authorList>
    </citation>
    <scope>INTERACTION WITH NR0B2</scope>
</reference>
<reference key="34">
    <citation type="journal article" date="2016" name="Cell">
        <title>Circadian amplitude regulation via FBXW7-targeted REV-ERBalpha degradation.</title>
        <authorList>
            <person name="Zhao X."/>
            <person name="Hirota T."/>
            <person name="Han X."/>
            <person name="Cho H."/>
            <person name="Chong L.W."/>
            <person name="Lamia K."/>
            <person name="Liu S."/>
            <person name="Atkins A.R."/>
            <person name="Banayo E."/>
            <person name="Liddle C."/>
            <person name="Yu R.T."/>
            <person name="Yates J.R. III"/>
            <person name="Kay S.A."/>
            <person name="Downes M."/>
            <person name="Evans R.M."/>
        </authorList>
    </citation>
    <scope>UBIQUITINATION</scope>
    <scope>PROTEASOMAL DEGRADATION</scope>
    <scope>INTERACTION WITH FBXW7 AND CDK1</scope>
    <scope>PHOSPHORYLATION AT THR-275</scope>
    <scope>MUTAGENESIS OF THR-275 AND SER-279</scope>
</reference>
<reference key="35">
    <citation type="journal article" date="2016" name="J. Cell Sci.">
        <title>REV-ERBalpha influences the stability and nuclear localization of the glucocorticoid receptor.</title>
        <authorList>
            <person name="Okabe T."/>
            <person name="Chavan R."/>
            <person name="Fonseca Costa S.S."/>
            <person name="Brenna A."/>
            <person name="Ripperger J.A."/>
            <person name="Albrecht U."/>
        </authorList>
    </citation>
    <scope>FUNCTION</scope>
    <scope>INTERACTION WITH HSP90AA1 AND HSP90AB1</scope>
    <scope>SUBCELLULAR LOCATION</scope>
    <scope>TISSUE SPECIFICITY</scope>
</reference>
<reference key="36">
    <citation type="journal article" date="2018" name="Cell Metab.">
        <title>Autophagy regulates the liver clock and glucose metabolism by degrading CRY1.</title>
        <authorList>
            <person name="Toledo M."/>
            <person name="Batista-Gonzalez A."/>
            <person name="Merheb E."/>
            <person name="Aoun M.L."/>
            <person name="Tarabra E."/>
            <person name="Feng D."/>
            <person name="Sarparanta J."/>
            <person name="Merlo P."/>
            <person name="Botre F."/>
            <person name="Schwartz G.J."/>
            <person name="Pessin J.E."/>
            <person name="Singh R."/>
        </authorList>
    </citation>
    <scope>LYSOSOME-MEDIATED DEGRADATION</scope>
</reference>
<reference key="37">
    <citation type="journal article" date="2018" name="Biochem. Pharmacol.">
        <title>E4bp4 regulates carboxylesterase 2 enzymes through repression of the nuclear receptor Rev-erbalpha in mice.</title>
        <authorList>
            <person name="Zhao M."/>
            <person name="Zhang T."/>
            <person name="Yu F."/>
            <person name="Guo L."/>
            <person name="Wu B."/>
        </authorList>
    </citation>
    <scope>FUNCTION</scope>
    <scope>INTERACTION WITH NFIL3</scope>
</reference>
<reference key="38">
    <citation type="journal article" date="2018" name="Genes Cells">
        <title>Phosphorylation of N-terminal regions of REV-ERBs regulates their intracellular localization.</title>
        <authorList>
            <person name="Ohba Y."/>
            <person name="Tei H."/>
        </authorList>
    </citation>
    <scope>SUBCELLULAR LOCATION</scope>
    <scope>PHOSPHORYLATION BY CKSN1E</scope>
</reference>
<reference key="39">
    <citation type="journal article" date="2018" name="PLoS Biol.">
        <title>Transcriptional programming of lipid and amino acid metabolism by the skeletal muscle circadian clock.</title>
        <authorList>
            <person name="Dyar K.A."/>
            <person name="Hubert M.J."/>
            <person name="Mir A.A."/>
            <person name="Ciciliot S."/>
            <person name="Lutter D."/>
            <person name="Greulich F."/>
            <person name="Quagliarini F."/>
            <person name="Kleinert M."/>
            <person name="Fischer K."/>
            <person name="Eichmann T.O."/>
            <person name="Wright L.E."/>
            <person name="Pena Paz M.I."/>
            <person name="Casarin A."/>
            <person name="Pertegato V."/>
            <person name="Romanello V."/>
            <person name="Albiero M."/>
            <person name="Mazzucco S."/>
            <person name="Rizzuto R."/>
            <person name="Salviati L."/>
            <person name="Biolo G."/>
            <person name="Blaauw B."/>
            <person name="Schiaffino S."/>
            <person name="Uhlenhaut N.H."/>
        </authorList>
    </citation>
    <scope>FUNCTION</scope>
</reference>
<reference key="40">
    <citation type="journal article" date="2018" name="J. Clin. Invest.">
        <title>Circadian clock component REV-ERBalpha controls homeostatic regulation of pulmonary inflammation.</title>
        <authorList>
            <person name="Pariollaud M."/>
            <person name="Gibbs J.E."/>
            <person name="Hopwood T.W."/>
            <person name="Brown S."/>
            <person name="Begley N."/>
            <person name="Vonslow R."/>
            <person name="Poolman T."/>
            <person name="Guo B."/>
            <person name="Saer B."/>
            <person name="Jones D.H."/>
            <person name="Tellam J.P."/>
            <person name="Bresciani S."/>
            <person name="Tomkinson N.C."/>
            <person name="Wojno-Picon J."/>
            <person name="Cooper A.W."/>
            <person name="Daniels D.A."/>
            <person name="Trump R.P."/>
            <person name="Grant D."/>
            <person name="Zuercher W."/>
            <person name="Willson T.M."/>
            <person name="MacDonald A.S."/>
            <person name="Bolognese B."/>
            <person name="Podolin P.L."/>
            <person name="Sanchez Y."/>
            <person name="Loudon A.S."/>
            <person name="Ray D.W."/>
        </authorList>
    </citation>
    <scope>FUNCTION</scope>
    <scope>TISSUE SPECIFICITY</scope>
    <scope>DISRUPTION PHENOTYPE</scope>
    <scope>UBIQUITINATION</scope>
    <scope>PROTEASOMAL DEGRADATION</scope>
    <scope>SUMOYLATION</scope>
</reference>
<reference key="41">
    <citation type="journal article" date="2018" name="Theranostics">
        <title>Small heterodimer partner regulates circadian cytochromes p450 and drug-induced hepatotoxicity.</title>
        <authorList>
            <person name="Zhang T."/>
            <person name="Yu F."/>
            <person name="Guo L."/>
            <person name="Chen M."/>
            <person name="Yuan X."/>
            <person name="Wu B."/>
        </authorList>
    </citation>
    <scope>FUNCTION</scope>
    <scope>INTERACTION WITH NR0B2</scope>
</reference>
<reference key="42">
    <citation type="journal article" date="2019" name="Nature">
        <title>PGRMC2 is an intracellular haem chaperone critical for adipocyte function.</title>
        <authorList>
            <person name="Galmozzi A."/>
            <person name="Kok B.P."/>
            <person name="Kim A.S."/>
            <person name="Montenegro-Burke J.R."/>
            <person name="Lee J.Y."/>
            <person name="Spreafico R."/>
            <person name="Mosure S."/>
            <person name="Albert V."/>
            <person name="Cintron-Colon R."/>
            <person name="Godio C."/>
            <person name="Webb W.R."/>
            <person name="Conti B."/>
            <person name="Solt L.A."/>
            <person name="Kojetin D."/>
            <person name="Parker C.G."/>
            <person name="Peluso J.J."/>
            <person name="Pru J.K."/>
            <person name="Siuzdak G."/>
            <person name="Cravatt B.F."/>
            <person name="Saez E."/>
        </authorList>
    </citation>
    <scope>HEME-BINDING</scope>
    <scope>FUNCTION</scope>
</reference>
<reference key="43">
    <citation type="journal article" date="2019" name="Proc. Natl. Acad. Sci. U.S.A.">
        <title>Circadian clock protein Rev-erbalpha regulates neuroinflammation.</title>
        <authorList>
            <person name="Griffin P."/>
            <person name="Dimitry J.M."/>
            <person name="Sheehan P.W."/>
            <person name="Lananna B.V."/>
            <person name="Guo C."/>
            <person name="Robinette M.L."/>
            <person name="Hayes M.E."/>
            <person name="Cedeno M.R."/>
            <person name="Nadarajah C.J."/>
            <person name="Ezerskiy L.A."/>
            <person name="Colonna M."/>
            <person name="Zhang J."/>
            <person name="Bauer A.Q."/>
            <person name="Burris T.P."/>
            <person name="Musiek E.S."/>
        </authorList>
    </citation>
    <scope>FUNCTION</scope>
    <scope>DISRUPTION PHENOTYPE</scope>
</reference>
<protein>
    <recommendedName>
        <fullName>Nuclear receptor subfamily 1 group D member 1</fullName>
    </recommendedName>
    <alternativeName>
        <fullName>Rev-erbA-alpha</fullName>
    </alternativeName>
    <alternativeName>
        <fullName>V-erbA-related protein 1</fullName>
        <shortName>EAR-1</shortName>
    </alternativeName>
</protein>
<sequence length="615" mass="66802">MTTLDSNNNTGGVITYIGSSGSSPSRTSPESLYSDSSNGSFQSLTQGCPTYFPPSPTGSLTQDPARSFGSAPPSLSDDSSPSSASSSSSSSSSSFYNGSPPGSLQVAMEDSSRVSPSKGTSNITKLNGMVLLCKVCGDVASGFHYGVHACEGCKGFFRRSIQQNIQYKRCLKNENCSIVRINRNRCQQCRFKKCLSVGMSRDAVRFGRIPKREKQRMLAEMQSAMNLANNQLSSLCPLETSPTPHPTSGSMGPSPPPAPAPTPLVGFSQFPQQLTPPRSPSPEPTMEDVISQVARAHREIFTYAHDKLGTSPGNFNANHASGSPSATTPHRWESQGCPSAPNDNNLLAAQRHNEALNGLRQGPSSYPPTWPSGPTHHSCHQPNSNGHRLCPTHVYSAPEGEAPANSLRQGNTKNVLLACPMNMYPHGRSGRTVQEIWEDFSMSFTPAVREVVEFAKHIPGFRDLSQHDQVTLLKAGTFEVLMVRFASLFNVKDQTVMFLSRTTYSLQELGAMGMGDLLNAMFDFSEKLNSLALTEEELGLFTAVVLVSADRSGMENSASVEQLQETLLRALRALVLKNRPSETSRFTKLLLKLPDLRTLNNMHSEKLLSFRVDAQ</sequence>
<comment type="function">
    <text evidence="7 8 9 10 11 12 14 15 16 18 19 20 21 24 25 26 27 28 30 33 35 36 38 39 40 41">Transcriptional repressor which coordinates circadian rhythm and metabolic pathways in a heme-dependent manner. Integral component of the complex transcription machinery that governs circadian rhythmicity and forms a critical negative limb of the circadian clock by directly repressing the expression of core clock components BMAL1, CLOCK and CRY1. Also regulates genes involved in metabolic functions, including lipid and bile acid metabolism, adipogenesis, gluconeogenesis and the macrophage inflammatory response. Acts as a receptor for heme which stimulates its interaction with the NCOR1/HDAC3 corepressor complex, enhancing transcriptional repression. Recognizes two classes of DNA response elements within the promoter of its target genes and can bind to DNA as either monomers or homodimers, depending on the nature of the response element. Binds as a monomer to a response element composed of the consensus half-site motif 5'-[A/G]GGTCA-3' preceded by an A/T-rich 5' sequence (RevRE), or as a homodimer to a direct repeat of the core motif spaced by two nucleotides (RevDR-2). Acts as a potent competitive repressor of ROR alpha (RORA) function and regulates the levels of its ligand heme by repressing the expression of PPARGC1A, a potent inducer of heme synthesis. Regulates lipid metabolism by repressing the expression of APOC3 and by influencing the activity of sterol response element binding proteins (SREBPs); represses INSIG2 which interferes with the proteolytic activation of SREBPs which in turn govern the rhythmic expression of enzymes with key functions in sterol and fatty acid synthesis. Regulates gluconeogenesis via repression of G6PC1 and PEPCK and adipocyte differentiation via repression of PPARG. Regulates glucagon release in pancreatic alpha-cells via the AMPK-NAMPT-SIRT1 pathway and the proliferation, glucose-induced insulin secretion and expression of key lipogenic genes in pancreatic-beta cells. Positively regulates bile acid synthesis by increasing hepatic expression of CYP7A1 via repression of NR0B2 and NFIL3 which are negative regulators of CYP7A1. Modulates skeletal muscle oxidative capacity by regulating mitochondrial biogenesis and autophagy; controls mitochondrial biogenesis and respiration by interfering with the STK11-PRKAA1/2-SIRT1-PPARGC1A signaling pathway. Represses the expression of SERPINE1/PAI1, an important modulator of cardiovascular disease and the expression of inflammatory cytokines and chemokines in macrophages. Represses gene expression at a distance in macrophages by inhibiting the transcription of enhancer-derived RNAs (eRNAs). Plays a role in the circadian regulation of body temperature and negatively regulates thermogenic transcriptional programs in brown adipose tissue (BAT); imposes a circadian oscillation in BAT activity, increasing body temperature when awake and depressing thermogenesis during sleep. In concert with NR2E3, regulates transcriptional networks critical for photoreceptor development and function. In addition to its activity as a repressor, can also act as a transcriptional activator. In the ovarian granulosa cells acts as a transcriptional activator of STAR which plays a role in steroid biosynthesis. In collaboration with SP1, activates GJA1 transcription in a heme-independent manner. Represses the transcription of CYP2B10, CYP4A10 and CYP4A14 (PubMed:30555544). Represses the transcription of CES2 (PubMed:29653076). Represses and regulates the circadian expression of TSHB in a NCOR1-dependent manner (PubMed:24794873). Negatively regulates the protein stability of NR3C1 and influences the time-dependent subcellular distribution of NR3C1, thereby affecting its transcriptional regulatory activity (PubMed:27686098). Plays a critical role in the circadian control of neutrophilic inflammation in the lung; under resting, non-stress conditions, acts as a rhythmic repressor to limit inflammatory activity whereas in the presence of inflammatory triggers undergoes ubiquitin-mediated degradation thereby relieving inhibition of the inflammatory response (PubMed:29533925). Plays a key role in the circadian regulation of microglial activation and neuroinflammation; suppresses microglial activation through the NF-kappaB pathway in the central nervous system (PubMed:30792350). Plays a role in the regulation of the diurnal rhythms of lipid and protein metabolism in the skeletal muscle via transcriptional repression of genes controlling lipid and amino acid metabolism in the muscle (PubMed:30096135).</text>
</comment>
<comment type="subunit">
    <text evidence="2 12 15 17 20 22 31 32 33 36 39 42">Binds DNA as a monomer or a homodimer (By similarity). Interacts with NR2E3 and ZNHIT1 (By similarity). Interacts with C1D (PubMed:9405624). Interacts with SP1 (PubMed:22549838). Interacts with OPHN1 (via C-terminus) (PubMed:21874017). Interacts with PER2; the interaction associates PER2 to BMAL1 promoter region (PubMed:20159955, PubMed:22170608). Interacts with CRY1 (By similarity). Interacts with CCAR2 (PubMed:23398316). Interacts with SIAH2 (By similarity). Interacts with FBXW7 and CDK1 (PubMed:27238018). Interacts with HUWE1 (By similarity). Interacts with NR0B2 (PubMed:25212631, PubMed:30555544). Interacts with NFIL3 (PubMed:29653076). Interacts (via domain NR LBD) with HSP90AA1 and HSP90AB1 (PubMed:27686098).</text>
</comment>
<comment type="subcellular location">
    <subcellularLocation>
        <location evidence="3 15 33 34">Nucleus</location>
    </subcellularLocation>
    <subcellularLocation>
        <location evidence="15 33 34">Cytoplasm</location>
    </subcellularLocation>
    <subcellularLocation>
        <location evidence="15">Cell projection</location>
        <location evidence="15">Dendrite</location>
    </subcellularLocation>
    <subcellularLocation>
        <location evidence="15">Cell projection</location>
        <location evidence="15">Dendritic spine</location>
    </subcellularLocation>
    <text evidence="15 33 34">Localizes to the cytoplasm, dendrites and dendritic spine in the presence of OPHN1 (PubMed:21874017). Localizes predominantly to the nucleus at ZT8 whereas it is cytoplasmic at ZT20 (PubMed:27686098). Phosphorylation by CSNK1E enhances its cytoplasmic localization (PubMed:29508494).</text>
</comment>
<comment type="tissue specificity">
    <text evidence="7 8 14 15 16 23 29 33 35">Expressed during adipocyte differentiation (at protein level). Expressed in skeletal muscle, bladder, lumbar spinal cord, pancreatic islets and hypothalamus. Expressed in developing and adult retina. In the adult retina, predominantly expressed in the outer nuclear layer, where rod and cone cells reside, and also localized to the ganglion cell layer. Expressed in a circadian manner in the liver (PubMed:27686098). Expressed in a circadian manner in the lung with a peak between ZT8 and ZT12 (PubMed:29533925).</text>
</comment>
<comment type="developmental stage">
    <text evidence="14">During development at embryonic day 18.5 dpc, expressed in the outer neuroblastic layer of the retina where developing postmitotic photoreceptors and retinal progenitors reside (at protein level).</text>
</comment>
<comment type="induction">
    <text evidence="6 20 23 29">Expression oscillates diurnally in the suprachiasmatic nucleus (SCN) of the hypothalamus as well as in peripheral tissues. In bladder smooth muscle cells, pancreas and lumbar spinal cord, exhibits night/day variations with a peak time at circadian time (CT) 4-12 and a trough at CT16-24.</text>
</comment>
<comment type="domain">
    <text>Composed of three domains: a modulating N-terminal domain, a DNA-binding domain and a C-terminal ligand-binding domain.</text>
</comment>
<comment type="PTM">
    <text evidence="2 13 32 35">Ubiquitinated, leading to its proteasomal degradation (PubMed:20534529). Ubiquitinated by the SCF(FBXW7) complex when phosphorylated by CDK1 leading to its proteasomal degradation (PubMed:27238018). Ubiquitinated by SIAH2; leading to its proteasomal degradation (By similarity). Rapidly ubiquitinated in response to inflammatory triggers and sumoylation is a prerequisite to its ubiquitination (PubMed:29533925).</text>
</comment>
<comment type="PTM">
    <text evidence="35">Sumoylated by UBE2I, desumoylated by SENP1, and sumoylation is a prerequisite to its ubiquitination.</text>
</comment>
<comment type="PTM">
    <text evidence="34">Phosphorylated by CSNK1E; phosphorylation enhances its cytoplasmic localization.</text>
</comment>
<comment type="PTM">
    <text evidence="37">Undergoes lysosome-mediated degradation in a time-dependent manner in the liver.</text>
</comment>
<comment type="disruption phenotype">
    <text evidence="12 14 28 35 40">Mice display increased cold tolerance, higher oxygen consumption rates, enhanced brown adipose tissue metabolic capacity, maintenance of higher body temperature throughout the light phase and increased glucose uptake only during the day. They also show retinal abnormalities such as pan-retinal spotting and decreased response to light and decreased bile acid accumulation. Double knockout for NR1D1 and PER2 show a significantly shorter period length compared with wild type or single knockouts for both genes. 50% of double knockouts animals show a stable circadian throughout at least 5 weeks in constant darkness. The other 50% of animals lose their circadian rhythmicity when held in constant darkness for an average of 21 days. Animals have blunted steady-state levels of glycogen in the liver in spite of normal patterns of food consumption. Mice show exaggerated pulmonary inflammatory responses (PubMed:29533925). Mice display enhanced spontaneous hippocampal microglial and astrocyte activation, increased microglial NF-kappaB signaling and exacerbated LPS-induced neuroinflammation in the hippocampus (PubMed:30792350). Conditional knockout of both NR1D1 and NR1D2 in bronchiolar epithelial cells abolished diurnal rhythmicity of PER2 in the bronchioles and increased inflammatory responses and chemokine activation (PubMed:29533925).</text>
</comment>
<comment type="similarity">
    <text evidence="43">Belongs to the nuclear hormone receptor family. NR1 subfamily.</text>
</comment>